<dbReference type="EMBL" id="U82598">
    <property type="protein sequence ID" value="AAB40851.1"/>
    <property type="molecule type" value="Genomic_DNA"/>
</dbReference>
<dbReference type="EMBL" id="U00096">
    <property type="protein sequence ID" value="AAC73751.1"/>
    <property type="molecule type" value="Genomic_DNA"/>
</dbReference>
<dbReference type="EMBL" id="AP009048">
    <property type="protein sequence ID" value="BAA35297.2"/>
    <property type="molecule type" value="Genomic_DNA"/>
</dbReference>
<dbReference type="PIR" id="H64799">
    <property type="entry name" value="H64799"/>
</dbReference>
<dbReference type="RefSeq" id="NP_415183.1">
    <property type="nucleotide sequence ID" value="NC_000913.3"/>
</dbReference>
<dbReference type="RefSeq" id="WP_000367875.1">
    <property type="nucleotide sequence ID" value="NZ_SSZK01000037.1"/>
</dbReference>
<dbReference type="SMR" id="P77319"/>
<dbReference type="BioGRID" id="4263357">
    <property type="interactions" value="38"/>
</dbReference>
<dbReference type="BioGRID" id="849603">
    <property type="interactions" value="1"/>
</dbReference>
<dbReference type="DIP" id="DIP-9942N"/>
<dbReference type="FunCoup" id="P77319">
    <property type="interactions" value="75"/>
</dbReference>
<dbReference type="IntAct" id="P77319">
    <property type="interactions" value="33"/>
</dbReference>
<dbReference type="STRING" id="511145.b0650"/>
<dbReference type="PaxDb" id="511145-b0650"/>
<dbReference type="EnsemblBacteria" id="AAC73751">
    <property type="protein sequence ID" value="AAC73751"/>
    <property type="gene ID" value="b0650"/>
</dbReference>
<dbReference type="GeneID" id="945218"/>
<dbReference type="KEGG" id="ecj:JW0645"/>
<dbReference type="KEGG" id="eco:b0650"/>
<dbReference type="KEGG" id="ecoc:C3026_03250"/>
<dbReference type="PATRIC" id="fig|1411691.4.peg.1618"/>
<dbReference type="EchoBASE" id="EB3417"/>
<dbReference type="eggNOG" id="COG0443">
    <property type="taxonomic scope" value="Bacteria"/>
</dbReference>
<dbReference type="InParanoid" id="P77319"/>
<dbReference type="OMA" id="RFMGTEK"/>
<dbReference type="OrthoDB" id="9766019at2"/>
<dbReference type="PhylomeDB" id="P77319"/>
<dbReference type="BioCyc" id="EcoCyc:G6357-MONOMER"/>
<dbReference type="PRO" id="PR:P77319"/>
<dbReference type="Proteomes" id="UP000000625">
    <property type="component" value="Chromosome"/>
</dbReference>
<dbReference type="GO" id="GO:0005524">
    <property type="term" value="F:ATP binding"/>
    <property type="evidence" value="ECO:0007669"/>
    <property type="project" value="UniProtKB-KW"/>
</dbReference>
<dbReference type="GO" id="GO:0016887">
    <property type="term" value="F:ATP hydrolysis activity"/>
    <property type="evidence" value="ECO:0000314"/>
    <property type="project" value="EcoCyc"/>
</dbReference>
<dbReference type="GO" id="GO:0140662">
    <property type="term" value="F:ATP-dependent protein folding chaperone"/>
    <property type="evidence" value="ECO:0007669"/>
    <property type="project" value="InterPro"/>
</dbReference>
<dbReference type="GO" id="GO:0031072">
    <property type="term" value="F:heat shock protein binding"/>
    <property type="evidence" value="ECO:0000318"/>
    <property type="project" value="GO_Central"/>
</dbReference>
<dbReference type="GO" id="GO:0044183">
    <property type="term" value="F:protein folding chaperone"/>
    <property type="evidence" value="ECO:0000318"/>
    <property type="project" value="GO_Central"/>
</dbReference>
<dbReference type="GO" id="GO:0051085">
    <property type="term" value="P:chaperone cofactor-dependent protein refolding"/>
    <property type="evidence" value="ECO:0000318"/>
    <property type="project" value="GO_Central"/>
</dbReference>
<dbReference type="GO" id="GO:0042026">
    <property type="term" value="P:protein refolding"/>
    <property type="evidence" value="ECO:0000318"/>
    <property type="project" value="GO_Central"/>
</dbReference>
<dbReference type="GO" id="GO:0006950">
    <property type="term" value="P:response to stress"/>
    <property type="evidence" value="ECO:0000315"/>
    <property type="project" value="EcoCyc"/>
</dbReference>
<dbReference type="CDD" id="cd10235">
    <property type="entry name" value="ASKHA_NBD_HSP70_HscC"/>
    <property type="match status" value="1"/>
</dbReference>
<dbReference type="FunFam" id="2.60.34.10:FF:000015">
    <property type="entry name" value="Molecular chaperone HscC"/>
    <property type="match status" value="1"/>
</dbReference>
<dbReference type="FunFam" id="3.30.420.40:FF:000144">
    <property type="entry name" value="Molecular chaperone HscC"/>
    <property type="match status" value="1"/>
</dbReference>
<dbReference type="FunFam" id="3.90.640.10:FF:000024">
    <property type="entry name" value="Molecular chaperone HscC"/>
    <property type="match status" value="1"/>
</dbReference>
<dbReference type="Gene3D" id="3.30.420.40">
    <property type="match status" value="2"/>
</dbReference>
<dbReference type="Gene3D" id="3.90.640.10">
    <property type="entry name" value="Actin, Chain A, domain 4"/>
    <property type="match status" value="1"/>
</dbReference>
<dbReference type="Gene3D" id="2.60.34.10">
    <property type="entry name" value="Substrate Binding Domain Of DNAk, Chain A, domain 1"/>
    <property type="match status" value="1"/>
</dbReference>
<dbReference type="InterPro" id="IPR043129">
    <property type="entry name" value="ATPase_NBD"/>
</dbReference>
<dbReference type="InterPro" id="IPR018181">
    <property type="entry name" value="Heat_shock_70_CS"/>
</dbReference>
<dbReference type="InterPro" id="IPR042030">
    <property type="entry name" value="HscC_NBD"/>
</dbReference>
<dbReference type="InterPro" id="IPR029047">
    <property type="entry name" value="HSP70_peptide-bd_sf"/>
</dbReference>
<dbReference type="InterPro" id="IPR013126">
    <property type="entry name" value="Hsp_70_fam"/>
</dbReference>
<dbReference type="PANTHER" id="PTHR19375">
    <property type="entry name" value="HEAT SHOCK PROTEIN 70KDA"/>
    <property type="match status" value="1"/>
</dbReference>
<dbReference type="Pfam" id="PF00012">
    <property type="entry name" value="HSP70"/>
    <property type="match status" value="2"/>
</dbReference>
<dbReference type="PRINTS" id="PR00301">
    <property type="entry name" value="HEATSHOCK70"/>
</dbReference>
<dbReference type="SUPFAM" id="SSF53067">
    <property type="entry name" value="Actin-like ATPase domain"/>
    <property type="match status" value="2"/>
</dbReference>
<dbReference type="SUPFAM" id="SSF100920">
    <property type="entry name" value="Heat shock protein 70kD (HSP70), peptide-binding domain"/>
    <property type="match status" value="1"/>
</dbReference>
<dbReference type="PROSITE" id="PS00297">
    <property type="entry name" value="HSP70_1"/>
    <property type="match status" value="1"/>
</dbReference>
<dbReference type="PROSITE" id="PS00329">
    <property type="entry name" value="HSP70_2"/>
    <property type="match status" value="1"/>
</dbReference>
<dbReference type="PROSITE" id="PS01036">
    <property type="entry name" value="HSP70_3"/>
    <property type="match status" value="1"/>
</dbReference>
<comment type="function">
    <text>Probable chaperone. Has ATPase activity. Not stimulated by DnaJ.</text>
</comment>
<comment type="interaction">
    <interactant intactId="EBI-562084">
        <id>P77319</id>
    </interactant>
    <interactant intactId="EBI-562146">
        <id>P37649</id>
        <label>pdeK</label>
    </interactant>
    <organismsDiffer>false</organismsDiffer>
    <experiments>3</experiments>
</comment>
<comment type="induction">
    <text>By heat shock. Activated up to a temperature of 40 degrees Celsius, after which levels decrease.</text>
</comment>
<comment type="similarity">
    <text evidence="1">Belongs to the heat shock protein 70 family.</text>
</comment>
<name>HSCC_ECOLI</name>
<keyword id="KW-0067">ATP-binding</keyword>
<keyword id="KW-0143">Chaperone</keyword>
<keyword id="KW-0547">Nucleotide-binding</keyword>
<keyword id="KW-1185">Reference proteome</keyword>
<keyword id="KW-0346">Stress response</keyword>
<protein>
    <recommendedName>
        <fullName>Chaperone protein HscC</fullName>
    </recommendedName>
    <alternativeName>
        <fullName>Hsc62</fullName>
    </alternativeName>
</protein>
<gene>
    <name type="primary">hscC</name>
    <name type="synonym">ybeW</name>
    <name type="ordered locus">b0650</name>
    <name type="ordered locus">JW0645</name>
</gene>
<sequence>MDNAELAIGIDLGTTNSLIAVWKDGAAQLIPNKFGEYLTPSIISMDENNHILVGKPAVSRRTSHPDKTAALFKRAMGSNTNWRLGSDTFNAPELSSLVLRSLKEDAEEFLQRPIKDVVISVPAYFSDEQRKHTRLAAELAGLNAVRLINEPTAAAMAYGLHTQQNTRSLVFDLGGGTFDVTVLEYATPVIEVHASAGDNFLGGEDFTHMLVDEVLKRADVARTTLNESELAALYACVEAAKCSNQSPLHIRWQYQEETRECEFYENELEDLWLPLLNRLRVPIEQALRDARLKPSQIDSLVLVGGASQMPLVQRIAVRLFGKLPYQSYDPSTIVALGAAIQAACRLRSEDIEEVILTDICPYSLGVEVNRQGVSGIFSPIIERNTTVPVSRVETYSTMHPEQDSITVNVYQGENHKVKNNILVESFDVPLKKTGAYQSIDIRFSYDINGLLEVDVLLEDGSVKSRVINHSPVTLSAQQIEESRTRLSALKIYPRDMLINRTFKAKLEELWARALGDEREEIGRVITDFDAALQSNDMARVDEVRRRASDYLAIEIP</sequence>
<evidence type="ECO:0000305" key="1"/>
<proteinExistence type="evidence at protein level"/>
<organism>
    <name type="scientific">Escherichia coli (strain K12)</name>
    <dbReference type="NCBI Taxonomy" id="83333"/>
    <lineage>
        <taxon>Bacteria</taxon>
        <taxon>Pseudomonadati</taxon>
        <taxon>Pseudomonadota</taxon>
        <taxon>Gammaproteobacteria</taxon>
        <taxon>Enterobacterales</taxon>
        <taxon>Enterobacteriaceae</taxon>
        <taxon>Escherichia</taxon>
    </lineage>
</organism>
<accession>P77319</accession>
<feature type="chain" id="PRO_0000078659" description="Chaperone protein HscC">
    <location>
        <begin position="1"/>
        <end position="556"/>
    </location>
</feature>
<reference key="1">
    <citation type="journal article" date="1996" name="DNA Res.">
        <title>A 718-kb DNA sequence of the Escherichia coli K-12 genome corresponding to the 12.7-28.0 min region on the linkage map.</title>
        <authorList>
            <person name="Oshima T."/>
            <person name="Aiba H."/>
            <person name="Baba T."/>
            <person name="Fujita K."/>
            <person name="Hayashi K."/>
            <person name="Honjo A."/>
            <person name="Ikemoto K."/>
            <person name="Inada T."/>
            <person name="Itoh T."/>
            <person name="Kajihara M."/>
            <person name="Kanai K."/>
            <person name="Kashimoto K."/>
            <person name="Kimura S."/>
            <person name="Kitagawa M."/>
            <person name="Makino K."/>
            <person name="Masuda S."/>
            <person name="Miki T."/>
            <person name="Mizobuchi K."/>
            <person name="Mori H."/>
            <person name="Motomura K."/>
            <person name="Nakamura Y."/>
            <person name="Nashimoto H."/>
            <person name="Nishio Y."/>
            <person name="Saito N."/>
            <person name="Sampei G."/>
            <person name="Seki Y."/>
            <person name="Tagami H."/>
            <person name="Takemoto K."/>
            <person name="Wada C."/>
            <person name="Yamamoto Y."/>
            <person name="Yano M."/>
            <person name="Horiuchi T."/>
        </authorList>
    </citation>
    <scope>NUCLEOTIDE SEQUENCE [LARGE SCALE GENOMIC DNA]</scope>
    <source>
        <strain>K12 / W3110 / ATCC 27325 / DSM 5911</strain>
    </source>
</reference>
<reference key="2">
    <citation type="submission" date="1997-01" db="EMBL/GenBank/DDBJ databases">
        <title>Sequence of minutes 4-25 of Escherichia coli.</title>
        <authorList>
            <person name="Chung E."/>
            <person name="Allen E."/>
            <person name="Araujo R."/>
            <person name="Aparicio A.M."/>
            <person name="Davis K."/>
            <person name="Duncan M."/>
            <person name="Federspiel N."/>
            <person name="Hyman R."/>
            <person name="Kalman S."/>
            <person name="Komp C."/>
            <person name="Kurdi O."/>
            <person name="Lew H."/>
            <person name="Lin D."/>
            <person name="Namath A."/>
            <person name="Oefner P."/>
            <person name="Roberts D."/>
            <person name="Schramm S."/>
            <person name="Davis R.W."/>
        </authorList>
    </citation>
    <scope>NUCLEOTIDE SEQUENCE [LARGE SCALE GENOMIC DNA]</scope>
    <source>
        <strain>K12 / MG1655 / ATCC 47076</strain>
    </source>
</reference>
<reference key="3">
    <citation type="journal article" date="1997" name="Science">
        <title>The complete genome sequence of Escherichia coli K-12.</title>
        <authorList>
            <person name="Blattner F.R."/>
            <person name="Plunkett G. III"/>
            <person name="Bloch C.A."/>
            <person name="Perna N.T."/>
            <person name="Burland V."/>
            <person name="Riley M."/>
            <person name="Collado-Vides J."/>
            <person name="Glasner J.D."/>
            <person name="Rode C.K."/>
            <person name="Mayhew G.F."/>
            <person name="Gregor J."/>
            <person name="Davis N.W."/>
            <person name="Kirkpatrick H.A."/>
            <person name="Goeden M.A."/>
            <person name="Rose D.J."/>
            <person name="Mau B."/>
            <person name="Shao Y."/>
        </authorList>
    </citation>
    <scope>NUCLEOTIDE SEQUENCE [LARGE SCALE GENOMIC DNA]</scope>
    <source>
        <strain>K12 / MG1655 / ATCC 47076</strain>
    </source>
</reference>
<reference key="4">
    <citation type="journal article" date="2006" name="Mol. Syst. Biol.">
        <title>Highly accurate genome sequences of Escherichia coli K-12 strains MG1655 and W3110.</title>
        <authorList>
            <person name="Hayashi K."/>
            <person name="Morooka N."/>
            <person name="Yamamoto Y."/>
            <person name="Fujita K."/>
            <person name="Isono K."/>
            <person name="Choi S."/>
            <person name="Ohtsubo E."/>
            <person name="Baba T."/>
            <person name="Wanner B.L."/>
            <person name="Mori H."/>
            <person name="Horiuchi T."/>
        </authorList>
    </citation>
    <scope>NUCLEOTIDE SEQUENCE [LARGE SCALE GENOMIC DNA]</scope>
    <source>
        <strain>K12 / W3110 / ATCC 27325 / DSM 5911</strain>
    </source>
</reference>
<reference key="5">
    <citation type="journal article" date="1998" name="Biochem. Biophys. Res. Commun.">
        <title>Hsc62, a new DnaK homologue of Escherichia coli.</title>
        <authorList>
            <person name="Yoshimune K."/>
            <person name="Yoshimura T."/>
            <person name="Esaki N."/>
        </authorList>
    </citation>
    <scope>CHARACTERIZATION</scope>
</reference>